<name>YAOA_SCHPO</name>
<accession>Q10089</accession>
<proteinExistence type="inferred from homology"/>
<reference key="1">
    <citation type="journal article" date="2002" name="Nature">
        <title>The genome sequence of Schizosaccharomyces pombe.</title>
        <authorList>
            <person name="Wood V."/>
            <person name="Gwilliam R."/>
            <person name="Rajandream M.A."/>
            <person name="Lyne M.H."/>
            <person name="Lyne R."/>
            <person name="Stewart A."/>
            <person name="Sgouros J.G."/>
            <person name="Peat N."/>
            <person name="Hayles J."/>
            <person name="Baker S.G."/>
            <person name="Basham D."/>
            <person name="Bowman S."/>
            <person name="Brooks K."/>
            <person name="Brown D."/>
            <person name="Brown S."/>
            <person name="Chillingworth T."/>
            <person name="Churcher C.M."/>
            <person name="Collins M."/>
            <person name="Connor R."/>
            <person name="Cronin A."/>
            <person name="Davis P."/>
            <person name="Feltwell T."/>
            <person name="Fraser A."/>
            <person name="Gentles S."/>
            <person name="Goble A."/>
            <person name="Hamlin N."/>
            <person name="Harris D.E."/>
            <person name="Hidalgo J."/>
            <person name="Hodgson G."/>
            <person name="Holroyd S."/>
            <person name="Hornsby T."/>
            <person name="Howarth S."/>
            <person name="Huckle E.J."/>
            <person name="Hunt S."/>
            <person name="Jagels K."/>
            <person name="James K.D."/>
            <person name="Jones L."/>
            <person name="Jones M."/>
            <person name="Leather S."/>
            <person name="McDonald S."/>
            <person name="McLean J."/>
            <person name="Mooney P."/>
            <person name="Moule S."/>
            <person name="Mungall K.L."/>
            <person name="Murphy L.D."/>
            <person name="Niblett D."/>
            <person name="Odell C."/>
            <person name="Oliver K."/>
            <person name="O'Neil S."/>
            <person name="Pearson D."/>
            <person name="Quail M.A."/>
            <person name="Rabbinowitsch E."/>
            <person name="Rutherford K.M."/>
            <person name="Rutter S."/>
            <person name="Saunders D."/>
            <person name="Seeger K."/>
            <person name="Sharp S."/>
            <person name="Skelton J."/>
            <person name="Simmonds M.N."/>
            <person name="Squares R."/>
            <person name="Squares S."/>
            <person name="Stevens K."/>
            <person name="Taylor K."/>
            <person name="Taylor R.G."/>
            <person name="Tivey A."/>
            <person name="Walsh S.V."/>
            <person name="Warren T."/>
            <person name="Whitehead S."/>
            <person name="Woodward J.R."/>
            <person name="Volckaert G."/>
            <person name="Aert R."/>
            <person name="Robben J."/>
            <person name="Grymonprez B."/>
            <person name="Weltjens I."/>
            <person name="Vanstreels E."/>
            <person name="Rieger M."/>
            <person name="Schaefer M."/>
            <person name="Mueller-Auer S."/>
            <person name="Gabel C."/>
            <person name="Fuchs M."/>
            <person name="Duesterhoeft A."/>
            <person name="Fritzc C."/>
            <person name="Holzer E."/>
            <person name="Moestl D."/>
            <person name="Hilbert H."/>
            <person name="Borzym K."/>
            <person name="Langer I."/>
            <person name="Beck A."/>
            <person name="Lehrach H."/>
            <person name="Reinhardt R."/>
            <person name="Pohl T.M."/>
            <person name="Eger P."/>
            <person name="Zimmermann W."/>
            <person name="Wedler H."/>
            <person name="Wambutt R."/>
            <person name="Purnelle B."/>
            <person name="Goffeau A."/>
            <person name="Cadieu E."/>
            <person name="Dreano S."/>
            <person name="Gloux S."/>
            <person name="Lelaure V."/>
            <person name="Mottier S."/>
            <person name="Galibert F."/>
            <person name="Aves S.J."/>
            <person name="Xiang Z."/>
            <person name="Hunt C."/>
            <person name="Moore K."/>
            <person name="Hurst S.M."/>
            <person name="Lucas M."/>
            <person name="Rochet M."/>
            <person name="Gaillardin C."/>
            <person name="Tallada V.A."/>
            <person name="Garzon A."/>
            <person name="Thode G."/>
            <person name="Daga R.R."/>
            <person name="Cruzado L."/>
            <person name="Jimenez J."/>
            <person name="Sanchez M."/>
            <person name="del Rey F."/>
            <person name="Benito J."/>
            <person name="Dominguez A."/>
            <person name="Revuelta J.L."/>
            <person name="Moreno S."/>
            <person name="Armstrong J."/>
            <person name="Forsburg S.L."/>
            <person name="Cerutti L."/>
            <person name="Lowe T."/>
            <person name="McCombie W.R."/>
            <person name="Paulsen I."/>
            <person name="Potashkin J."/>
            <person name="Shpakovski G.V."/>
            <person name="Ussery D."/>
            <person name="Barrell B.G."/>
            <person name="Nurse P."/>
        </authorList>
    </citation>
    <scope>NUCLEOTIDE SEQUENCE [LARGE SCALE GENOMIC DNA]</scope>
    <source>
        <strain>972 / ATCC 24843</strain>
    </source>
</reference>
<gene>
    <name type="ORF">SPAC11D3.10</name>
</gene>
<feature type="chain" id="PRO_0000116454" description="Uncharacterized protein C11D3.10">
    <location>
        <begin position="1"/>
        <end position="434"/>
    </location>
</feature>
<feature type="modified residue" description="N6-(pyridoxal phosphate)lysine" evidence="1">
    <location>
        <position position="216"/>
    </location>
</feature>
<protein>
    <recommendedName>
        <fullName>Uncharacterized protein C11D3.10</fullName>
    </recommendedName>
</protein>
<organism>
    <name type="scientific">Schizosaccharomyces pombe (strain 972 / ATCC 24843)</name>
    <name type="common">Fission yeast</name>
    <dbReference type="NCBI Taxonomy" id="284812"/>
    <lineage>
        <taxon>Eukaryota</taxon>
        <taxon>Fungi</taxon>
        <taxon>Dikarya</taxon>
        <taxon>Ascomycota</taxon>
        <taxon>Taphrinomycotina</taxon>
        <taxon>Schizosaccharomycetes</taxon>
        <taxon>Schizosaccharomycetales</taxon>
        <taxon>Schizosaccharomycetaceae</taxon>
        <taxon>Schizosaccharomyces</taxon>
    </lineage>
</organism>
<evidence type="ECO:0000250" key="1"/>
<sequence length="434" mass="48238">MNALAKIKAFRSYVPLLQGNTKTIYLNQSFQAPMNMLVSTALQGYINEGLYNPHPKPMWKERTEETRSLLAKLLNASTKDSITFTRDTTEGLNLFQRSLKWKPGDNVVILDNEHPNQGFGWIALQNDGLEVRLVPNEGQYHANASTFAPYVDSRTKAIGLSSVMFHSGQKNDVKDIANAFRPKGIHVLADLTQQVGLSKIDVQDLNVSACAFSCHKGLGCPTGLGVLYVSPLAISELRSTPPFVGGGAVEDFKEDLKLKLNAKYHQSALRYEHTNNAYMLITALRAYLKFLLKVGISNVERYLQGLGKDLIKELESLNVSVIGYKDFDKHSSHSYVLKILNPEWFDFLRQQGVCVSRFESGIRVSFGLYNTSKDIIKFISVIRKGLALNIPLNIRPPQRIAVMDNPLVGISDEAIAAMKLPANTLSNRPLAANI</sequence>
<keyword id="KW-0663">Pyridoxal phosphate</keyword>
<keyword id="KW-1185">Reference proteome</keyword>
<dbReference type="EMBL" id="CU329670">
    <property type="protein sequence ID" value="CAA92311.1"/>
    <property type="molecule type" value="Genomic_DNA"/>
</dbReference>
<dbReference type="PIR" id="T37521">
    <property type="entry name" value="T37521"/>
</dbReference>
<dbReference type="RefSeq" id="NP_592807.1">
    <property type="nucleotide sequence ID" value="NM_001018207.2"/>
</dbReference>
<dbReference type="SMR" id="Q10089"/>
<dbReference type="FunCoup" id="Q10089">
    <property type="interactions" value="1"/>
</dbReference>
<dbReference type="STRING" id="284812.Q10089"/>
<dbReference type="PaxDb" id="4896-SPAC11D3.10.1"/>
<dbReference type="EnsemblFungi" id="SPAC11D3.10.1">
    <property type="protein sequence ID" value="SPAC11D3.10.1:pep"/>
    <property type="gene ID" value="SPAC11D3.10"/>
</dbReference>
<dbReference type="KEGG" id="spo:2542999"/>
<dbReference type="PomBase" id="SPAC11D3.10"/>
<dbReference type="VEuPathDB" id="FungiDB:SPAC11D3.10"/>
<dbReference type="eggNOG" id="KOG1549">
    <property type="taxonomic scope" value="Eukaryota"/>
</dbReference>
<dbReference type="HOGENOM" id="CLU_003433_2_1_1"/>
<dbReference type="InParanoid" id="Q10089"/>
<dbReference type="OMA" id="YGWMALR"/>
<dbReference type="PhylomeDB" id="Q10089"/>
<dbReference type="PRO" id="PR:Q10089"/>
<dbReference type="Proteomes" id="UP000002485">
    <property type="component" value="Chromosome I"/>
</dbReference>
<dbReference type="GO" id="GO:0031071">
    <property type="term" value="F:cysteine desulfurase activity"/>
    <property type="evidence" value="ECO:0000250"/>
    <property type="project" value="PomBase"/>
</dbReference>
<dbReference type="FunFam" id="3.40.640.10:FF:000296">
    <property type="entry name" value="Hercynylcysteine sulfoxide lyase"/>
    <property type="match status" value="1"/>
</dbReference>
<dbReference type="Gene3D" id="3.90.1150.10">
    <property type="entry name" value="Aspartate Aminotransferase, domain 1"/>
    <property type="match status" value="1"/>
</dbReference>
<dbReference type="Gene3D" id="3.40.640.10">
    <property type="entry name" value="Type I PLP-dependent aspartate aminotransferase-like (Major domain)"/>
    <property type="match status" value="1"/>
</dbReference>
<dbReference type="InterPro" id="IPR000192">
    <property type="entry name" value="Aminotrans_V_dom"/>
</dbReference>
<dbReference type="InterPro" id="IPR015424">
    <property type="entry name" value="PyrdxlP-dep_Trfase"/>
</dbReference>
<dbReference type="InterPro" id="IPR015421">
    <property type="entry name" value="PyrdxlP-dep_Trfase_major"/>
</dbReference>
<dbReference type="InterPro" id="IPR015422">
    <property type="entry name" value="PyrdxlP-dep_Trfase_small"/>
</dbReference>
<dbReference type="PANTHER" id="PTHR43586">
    <property type="entry name" value="CYSTEINE DESULFURASE"/>
    <property type="match status" value="1"/>
</dbReference>
<dbReference type="PANTHER" id="PTHR43586:SF8">
    <property type="entry name" value="CYSTEINE DESULFURASE 1, CHLOROPLASTIC"/>
    <property type="match status" value="1"/>
</dbReference>
<dbReference type="Pfam" id="PF00266">
    <property type="entry name" value="Aminotran_5"/>
    <property type="match status" value="1"/>
</dbReference>
<dbReference type="SUPFAM" id="SSF53383">
    <property type="entry name" value="PLP-dependent transferases"/>
    <property type="match status" value="1"/>
</dbReference>